<feature type="signal peptide" evidence="2">
    <location>
        <begin position="1"/>
        <end position="21"/>
    </location>
</feature>
<feature type="propeptide" id="PRO_0000400907" evidence="4">
    <location>
        <begin position="22"/>
        <end position="74"/>
    </location>
</feature>
<feature type="peptide" id="PRO_0000400908" description="U11-theraphotoxin-Hhn1a">
    <location>
        <begin position="75"/>
        <end position="113"/>
    </location>
</feature>
<feature type="region of interest" description="Disordered" evidence="3">
    <location>
        <begin position="60"/>
        <end position="83"/>
    </location>
</feature>
<feature type="compositionally biased region" description="Basic and acidic residues" evidence="3">
    <location>
        <begin position="60"/>
        <end position="69"/>
    </location>
</feature>
<feature type="disulfide bond" evidence="1">
    <location>
        <begin position="75"/>
        <end position="90"/>
    </location>
</feature>
<feature type="disulfide bond" evidence="1">
    <location>
        <begin position="82"/>
        <end position="95"/>
    </location>
</feature>
<feature type="disulfide bond" evidence="1">
    <location>
        <begin position="89"/>
        <end position="110"/>
    </location>
</feature>
<keyword id="KW-0903">Direct protein sequencing</keyword>
<keyword id="KW-1015">Disulfide bond</keyword>
<keyword id="KW-0872">Ion channel impairing toxin</keyword>
<keyword id="KW-0960">Knottin</keyword>
<keyword id="KW-0964">Secreted</keyword>
<keyword id="KW-0732">Signal</keyword>
<keyword id="KW-0800">Toxin</keyword>
<name>H1626_CYRHA</name>
<dbReference type="EMBL" id="GU293058">
    <property type="protein sequence ID" value="ADB56874.1"/>
    <property type="molecule type" value="mRNA"/>
</dbReference>
<dbReference type="ArachnoServer" id="AS001592">
    <property type="toxin name" value="U11-theraphotoxin-Hhn1a"/>
</dbReference>
<dbReference type="GO" id="GO:0005576">
    <property type="term" value="C:extracellular region"/>
    <property type="evidence" value="ECO:0007669"/>
    <property type="project" value="UniProtKB-SubCell"/>
</dbReference>
<dbReference type="GO" id="GO:0019871">
    <property type="term" value="F:sodium channel inhibitor activity"/>
    <property type="evidence" value="ECO:0007669"/>
    <property type="project" value="InterPro"/>
</dbReference>
<dbReference type="GO" id="GO:0090729">
    <property type="term" value="F:toxin activity"/>
    <property type="evidence" value="ECO:0007669"/>
    <property type="project" value="UniProtKB-KW"/>
</dbReference>
<dbReference type="InterPro" id="IPR012627">
    <property type="entry name" value="Toxin_22"/>
</dbReference>
<dbReference type="Pfam" id="PF08092">
    <property type="entry name" value="Toxin_22"/>
    <property type="match status" value="1"/>
</dbReference>
<comment type="function">
    <text evidence="1">Probable ion channel inhibitor.</text>
</comment>
<comment type="subcellular location">
    <subcellularLocation>
        <location>Secreted</location>
    </subcellularLocation>
</comment>
<comment type="tissue specificity">
    <text>Expressed by the venom gland.</text>
</comment>
<comment type="domain">
    <text evidence="1">The presence of a 'disulfide through disulfide knot' structurally defines this protein as a knottin.</text>
</comment>
<comment type="similarity">
    <text evidence="5">Belongs to the neurotoxin 14 (magi-1) family. 01 (HNTX-16) subfamily.</text>
</comment>
<sequence length="113" mass="13059">MNTVRVTFLLVFVLAVSLGQADKDENRMEMQEKTEQGNSYLDFAENLPLQKLEELEAKLLEEDSEESRNSRQKRCIGEGVPCDENDPRCCSGLVCLKPTLHGIWYKSYYCYKK</sequence>
<proteinExistence type="evidence at protein level"/>
<protein>
    <recommendedName>
        <fullName>U11-theraphotoxin-Hhn1a</fullName>
        <shortName>U11-TRTX-Hhn1a</shortName>
    </recommendedName>
    <alternativeName>
        <fullName>Hainantoxin-XVI.26</fullName>
        <shortName>HNTX-XVI.26</shortName>
    </alternativeName>
    <alternativeName>
        <fullName>Peptide F4-19.87</fullName>
    </alternativeName>
</protein>
<reference key="1">
    <citation type="journal article" date="2010" name="J. Proteome Res.">
        <title>Molecular diversification of peptide toxins from the tarantula Haplopelma hainanum (Ornithoctonus hainana) venom based on transcriptomic, peptidomic, and genomic analyses.</title>
        <authorList>
            <person name="Tang X."/>
            <person name="Zhang Y."/>
            <person name="Hu W."/>
            <person name="Xu D."/>
            <person name="Tao H."/>
            <person name="Yang X."/>
            <person name="Li Y."/>
            <person name="Jiang L."/>
            <person name="Liang S."/>
        </authorList>
    </citation>
    <scope>NUCLEOTIDE SEQUENCE [LARGE SCALE MRNA]</scope>
    <scope>PROTEIN SEQUENCE OF 75-113</scope>
    <scope>IDENTIFICATION BY MASS SPECTROMETRY</scope>
    <source>
        <tissue>Venom</tissue>
        <tissue>Venom gland</tissue>
    </source>
</reference>
<evidence type="ECO:0000250" key="1"/>
<evidence type="ECO:0000255" key="2"/>
<evidence type="ECO:0000256" key="3">
    <source>
        <dbReference type="SAM" id="MobiDB-lite"/>
    </source>
</evidence>
<evidence type="ECO:0000269" key="4">
    <source>
    </source>
</evidence>
<evidence type="ECO:0000305" key="5"/>
<accession>D2Y2I1</accession>
<organism>
    <name type="scientific">Cyriopagopus hainanus</name>
    <name type="common">Chinese bird spider</name>
    <name type="synonym">Haplopelma hainanum</name>
    <dbReference type="NCBI Taxonomy" id="209901"/>
    <lineage>
        <taxon>Eukaryota</taxon>
        <taxon>Metazoa</taxon>
        <taxon>Ecdysozoa</taxon>
        <taxon>Arthropoda</taxon>
        <taxon>Chelicerata</taxon>
        <taxon>Arachnida</taxon>
        <taxon>Araneae</taxon>
        <taxon>Mygalomorphae</taxon>
        <taxon>Theraphosidae</taxon>
        <taxon>Haplopelma</taxon>
    </lineage>
</organism>